<name>PSN2_HUMAN</name>
<evidence type="ECO:0000250" key="1"/>
<evidence type="ECO:0000250" key="2">
    <source>
        <dbReference type="UniProtKB" id="Q61144"/>
    </source>
</evidence>
<evidence type="ECO:0000255" key="3"/>
<evidence type="ECO:0000256" key="4">
    <source>
        <dbReference type="SAM" id="MobiDB-lite"/>
    </source>
</evidence>
<evidence type="ECO:0000269" key="5">
    <source>
    </source>
</evidence>
<evidence type="ECO:0000269" key="6">
    <source>
    </source>
</evidence>
<evidence type="ECO:0000269" key="7">
    <source>
    </source>
</evidence>
<evidence type="ECO:0000269" key="8">
    <source>
    </source>
</evidence>
<evidence type="ECO:0000269" key="9">
    <source>
    </source>
</evidence>
<evidence type="ECO:0000269" key="10">
    <source>
    </source>
</evidence>
<evidence type="ECO:0000269" key="11">
    <source>
    </source>
</evidence>
<evidence type="ECO:0000269" key="12">
    <source>
    </source>
</evidence>
<evidence type="ECO:0000269" key="13">
    <source>
    </source>
</evidence>
<evidence type="ECO:0000269" key="14">
    <source>
    </source>
</evidence>
<evidence type="ECO:0000269" key="15">
    <source>
    </source>
</evidence>
<evidence type="ECO:0000269" key="16">
    <source>
    </source>
</evidence>
<evidence type="ECO:0000269" key="17">
    <source>
    </source>
</evidence>
<evidence type="ECO:0000269" key="18">
    <source>
    </source>
</evidence>
<evidence type="ECO:0000269" key="19">
    <source>
    </source>
</evidence>
<evidence type="ECO:0000269" key="20">
    <source>
    </source>
</evidence>
<evidence type="ECO:0000269" key="21">
    <source>
    </source>
</evidence>
<evidence type="ECO:0000269" key="22">
    <source>
    </source>
</evidence>
<evidence type="ECO:0000269" key="23">
    <source>
    </source>
</evidence>
<evidence type="ECO:0000303" key="24">
    <source>
    </source>
</evidence>
<evidence type="ECO:0000305" key="25"/>
<evidence type="ECO:0000305" key="26">
    <source>
    </source>
</evidence>
<evidence type="ECO:0000305" key="27">
    <source>
    </source>
</evidence>
<evidence type="ECO:0007744" key="28">
    <source>
    </source>
</evidence>
<evidence type="ECO:0007744" key="29">
    <source>
    </source>
</evidence>
<evidence type="ECO:0007829" key="30">
    <source>
        <dbReference type="PDB" id="7Y5X"/>
    </source>
</evidence>
<reference key="1">
    <citation type="journal article" date="1995" name="Science">
        <title>Candidate gene for the chromosome 1 familial Alzheimer's disease locus.</title>
        <authorList>
            <person name="Levy-Lahad E."/>
            <person name="Wasco W."/>
            <person name="Poorkaj P."/>
            <person name="Romano D.M."/>
            <person name="Oshima J."/>
            <person name="Pettingell W.H. Jr."/>
            <person name="Yu C.-E."/>
            <person name="Jondro P.D."/>
            <person name="Schmidt S.D."/>
            <person name="Wang K."/>
            <person name="Crowley A.C."/>
            <person name="Fu Y.-H."/>
            <person name="Guenette S.Y."/>
            <person name="Galas D."/>
            <person name="Nemens E."/>
            <person name="Wijsman E.M."/>
            <person name="Bird T.D."/>
            <person name="Schellenberg G.D."/>
            <person name="Tanzi R.E."/>
        </authorList>
    </citation>
    <scope>NUCLEOTIDE SEQUENCE [MRNA]</scope>
    <scope>VARIANT AD4 ILE-141</scope>
</reference>
<reference key="2">
    <citation type="journal article" date="1995" name="Nature">
        <title>Familial Alzheimer's disease in kindreds with missense mutations in a gene on chromosome 1 related to the Alzheimer's disease type 3 gene.</title>
        <authorList>
            <person name="Rogaev E.I."/>
            <person name="Sherrington R."/>
            <person name="Rogaeva E.A."/>
            <person name="Levesque G."/>
            <person name="Ikeda M."/>
            <person name="Liang Y."/>
            <person name="Chi H."/>
            <person name="Lin C."/>
            <person name="Holman K."/>
            <person name="Tsuda T."/>
            <person name="Mar L."/>
            <person name="Sorbi S."/>
            <person name="Nacmias B."/>
            <person name="Piacentini S."/>
            <person name="Amaducci L."/>
            <person name="Chumakov I."/>
            <person name="Cohen D."/>
            <person name="Lannfelt L."/>
            <person name="Fraser P.E."/>
            <person name="Rommens J.M."/>
            <person name="St George-Hyslop P.H."/>
        </authorList>
    </citation>
    <scope>NUCLEOTIDE SEQUENCE [MRNA]</scope>
    <scope>VARIANTS AD4 ILE-141 AND VAL-239</scope>
    <source>
        <tissue>Brain</tissue>
        <tissue>Colon</tissue>
    </source>
</reference>
<reference key="3">
    <citation type="journal article" date="1995" name="Proc. Natl. Acad. Sci. U.S.A.">
        <title>Identification and expression analysis of a potential familial Alzheimer disease gene on chromosome 1 related to AD3.</title>
        <authorList>
            <person name="Li J."/>
            <person name="Ma J."/>
            <person name="Potter H."/>
        </authorList>
    </citation>
    <scope>NUCLEOTIDE SEQUENCE [MRNA]</scope>
</reference>
<reference key="4">
    <citation type="journal article" date="1996" name="Genomics">
        <title>Genomic structure and expression of STM2, the chromosome 1 familial Alzheimer disease gene.</title>
        <authorList>
            <person name="Levy-Lahad E."/>
            <person name="Poorkaj P."/>
            <person name="Wang K."/>
            <person name="Fu Y.H."/>
            <person name="Oshima J."/>
            <person name="Mulligan J."/>
            <person name="Schellenberg G.D."/>
        </authorList>
    </citation>
    <scope>NUCLEOTIDE SEQUENCE [GENOMIC DNA]</scope>
</reference>
<reference key="5">
    <citation type="submission" date="2003-05" db="EMBL/GenBank/DDBJ databases">
        <title>Cloning of human full-length CDSs in BD Creator(TM) system donor vector.</title>
        <authorList>
            <person name="Kalnine N."/>
            <person name="Chen X."/>
            <person name="Rolfs A."/>
            <person name="Halleck A."/>
            <person name="Hines L."/>
            <person name="Eisenstein S."/>
            <person name="Koundinya M."/>
            <person name="Raphael J."/>
            <person name="Moreira D."/>
            <person name="Kelley T."/>
            <person name="LaBaer J."/>
            <person name="Lin Y."/>
            <person name="Phelan M."/>
            <person name="Farmer A."/>
        </authorList>
    </citation>
    <scope>NUCLEOTIDE SEQUENCE [LARGE SCALE MRNA]</scope>
</reference>
<reference key="6">
    <citation type="journal article" date="2004" name="Nat. Genet.">
        <title>Complete sequencing and characterization of 21,243 full-length human cDNAs.</title>
        <authorList>
            <person name="Ota T."/>
            <person name="Suzuki Y."/>
            <person name="Nishikawa T."/>
            <person name="Otsuki T."/>
            <person name="Sugiyama T."/>
            <person name="Irie R."/>
            <person name="Wakamatsu A."/>
            <person name="Hayashi K."/>
            <person name="Sato H."/>
            <person name="Nagai K."/>
            <person name="Kimura K."/>
            <person name="Makita H."/>
            <person name="Sekine M."/>
            <person name="Obayashi M."/>
            <person name="Nishi T."/>
            <person name="Shibahara T."/>
            <person name="Tanaka T."/>
            <person name="Ishii S."/>
            <person name="Yamamoto J."/>
            <person name="Saito K."/>
            <person name="Kawai Y."/>
            <person name="Isono Y."/>
            <person name="Nakamura Y."/>
            <person name="Nagahari K."/>
            <person name="Murakami K."/>
            <person name="Yasuda T."/>
            <person name="Iwayanagi T."/>
            <person name="Wagatsuma M."/>
            <person name="Shiratori A."/>
            <person name="Sudo H."/>
            <person name="Hosoiri T."/>
            <person name="Kaku Y."/>
            <person name="Kodaira H."/>
            <person name="Kondo H."/>
            <person name="Sugawara M."/>
            <person name="Takahashi M."/>
            <person name="Kanda K."/>
            <person name="Yokoi T."/>
            <person name="Furuya T."/>
            <person name="Kikkawa E."/>
            <person name="Omura Y."/>
            <person name="Abe K."/>
            <person name="Kamihara K."/>
            <person name="Katsuta N."/>
            <person name="Sato K."/>
            <person name="Tanikawa M."/>
            <person name="Yamazaki M."/>
            <person name="Ninomiya K."/>
            <person name="Ishibashi T."/>
            <person name="Yamashita H."/>
            <person name="Murakawa K."/>
            <person name="Fujimori K."/>
            <person name="Tanai H."/>
            <person name="Kimata M."/>
            <person name="Watanabe M."/>
            <person name="Hiraoka S."/>
            <person name="Chiba Y."/>
            <person name="Ishida S."/>
            <person name="Ono Y."/>
            <person name="Takiguchi S."/>
            <person name="Watanabe S."/>
            <person name="Yosida M."/>
            <person name="Hotuta T."/>
            <person name="Kusano J."/>
            <person name="Kanehori K."/>
            <person name="Takahashi-Fujii A."/>
            <person name="Hara H."/>
            <person name="Tanase T.-O."/>
            <person name="Nomura Y."/>
            <person name="Togiya S."/>
            <person name="Komai F."/>
            <person name="Hara R."/>
            <person name="Takeuchi K."/>
            <person name="Arita M."/>
            <person name="Imose N."/>
            <person name="Musashino K."/>
            <person name="Yuuki H."/>
            <person name="Oshima A."/>
            <person name="Sasaki N."/>
            <person name="Aotsuka S."/>
            <person name="Yoshikawa Y."/>
            <person name="Matsunawa H."/>
            <person name="Ichihara T."/>
            <person name="Shiohata N."/>
            <person name="Sano S."/>
            <person name="Moriya S."/>
            <person name="Momiyama H."/>
            <person name="Satoh N."/>
            <person name="Takami S."/>
            <person name="Terashima Y."/>
            <person name="Suzuki O."/>
            <person name="Nakagawa S."/>
            <person name="Senoh A."/>
            <person name="Mizoguchi H."/>
            <person name="Goto Y."/>
            <person name="Shimizu F."/>
            <person name="Wakebe H."/>
            <person name="Hishigaki H."/>
            <person name="Watanabe T."/>
            <person name="Sugiyama A."/>
            <person name="Takemoto M."/>
            <person name="Kawakami B."/>
            <person name="Yamazaki M."/>
            <person name="Watanabe K."/>
            <person name="Kumagai A."/>
            <person name="Itakura S."/>
            <person name="Fukuzumi Y."/>
            <person name="Fujimori Y."/>
            <person name="Komiyama M."/>
            <person name="Tashiro H."/>
            <person name="Tanigami A."/>
            <person name="Fujiwara T."/>
            <person name="Ono T."/>
            <person name="Yamada K."/>
            <person name="Fujii Y."/>
            <person name="Ozaki K."/>
            <person name="Hirao M."/>
            <person name="Ohmori Y."/>
            <person name="Kawabata A."/>
            <person name="Hikiji T."/>
            <person name="Kobatake N."/>
            <person name="Inagaki H."/>
            <person name="Ikema Y."/>
            <person name="Okamoto S."/>
            <person name="Okitani R."/>
            <person name="Kawakami T."/>
            <person name="Noguchi S."/>
            <person name="Itoh T."/>
            <person name="Shigeta K."/>
            <person name="Senba T."/>
            <person name="Matsumura K."/>
            <person name="Nakajima Y."/>
            <person name="Mizuno T."/>
            <person name="Morinaga M."/>
            <person name="Sasaki M."/>
            <person name="Togashi T."/>
            <person name="Oyama M."/>
            <person name="Hata H."/>
            <person name="Watanabe M."/>
            <person name="Komatsu T."/>
            <person name="Mizushima-Sugano J."/>
            <person name="Satoh T."/>
            <person name="Shirai Y."/>
            <person name="Takahashi Y."/>
            <person name="Nakagawa K."/>
            <person name="Okumura K."/>
            <person name="Nagase T."/>
            <person name="Nomura N."/>
            <person name="Kikuchi H."/>
            <person name="Masuho Y."/>
            <person name="Yamashita R."/>
            <person name="Nakai K."/>
            <person name="Yada T."/>
            <person name="Nakamura Y."/>
            <person name="Ohara O."/>
            <person name="Isogai T."/>
            <person name="Sugano S."/>
        </authorList>
    </citation>
    <scope>NUCLEOTIDE SEQUENCE [LARGE SCALE MRNA] (ISOFORM 3)</scope>
    <source>
        <tissue>Testis</tissue>
    </source>
</reference>
<reference key="7">
    <citation type="journal article" date="2006" name="Nature">
        <title>The DNA sequence and biological annotation of human chromosome 1.</title>
        <authorList>
            <person name="Gregory S.G."/>
            <person name="Barlow K.F."/>
            <person name="McLay K.E."/>
            <person name="Kaul R."/>
            <person name="Swarbreck D."/>
            <person name="Dunham A."/>
            <person name="Scott C.E."/>
            <person name="Howe K.L."/>
            <person name="Woodfine K."/>
            <person name="Spencer C.C.A."/>
            <person name="Jones M.C."/>
            <person name="Gillson C."/>
            <person name="Searle S."/>
            <person name="Zhou Y."/>
            <person name="Kokocinski F."/>
            <person name="McDonald L."/>
            <person name="Evans R."/>
            <person name="Phillips K."/>
            <person name="Atkinson A."/>
            <person name="Cooper R."/>
            <person name="Jones C."/>
            <person name="Hall R.E."/>
            <person name="Andrews T.D."/>
            <person name="Lloyd C."/>
            <person name="Ainscough R."/>
            <person name="Almeida J.P."/>
            <person name="Ambrose K.D."/>
            <person name="Anderson F."/>
            <person name="Andrew R.W."/>
            <person name="Ashwell R.I.S."/>
            <person name="Aubin K."/>
            <person name="Babbage A.K."/>
            <person name="Bagguley C.L."/>
            <person name="Bailey J."/>
            <person name="Beasley H."/>
            <person name="Bethel G."/>
            <person name="Bird C.P."/>
            <person name="Bray-Allen S."/>
            <person name="Brown J.Y."/>
            <person name="Brown A.J."/>
            <person name="Buckley D."/>
            <person name="Burton J."/>
            <person name="Bye J."/>
            <person name="Carder C."/>
            <person name="Chapman J.C."/>
            <person name="Clark S.Y."/>
            <person name="Clarke G."/>
            <person name="Clee C."/>
            <person name="Cobley V."/>
            <person name="Collier R.E."/>
            <person name="Corby N."/>
            <person name="Coville G.J."/>
            <person name="Davies J."/>
            <person name="Deadman R."/>
            <person name="Dunn M."/>
            <person name="Earthrowl M."/>
            <person name="Ellington A.G."/>
            <person name="Errington H."/>
            <person name="Frankish A."/>
            <person name="Frankland J."/>
            <person name="French L."/>
            <person name="Garner P."/>
            <person name="Garnett J."/>
            <person name="Gay L."/>
            <person name="Ghori M.R.J."/>
            <person name="Gibson R."/>
            <person name="Gilby L.M."/>
            <person name="Gillett W."/>
            <person name="Glithero R.J."/>
            <person name="Grafham D.V."/>
            <person name="Griffiths C."/>
            <person name="Griffiths-Jones S."/>
            <person name="Grocock R."/>
            <person name="Hammond S."/>
            <person name="Harrison E.S.I."/>
            <person name="Hart E."/>
            <person name="Haugen E."/>
            <person name="Heath P.D."/>
            <person name="Holmes S."/>
            <person name="Holt K."/>
            <person name="Howden P.J."/>
            <person name="Hunt A.R."/>
            <person name="Hunt S.E."/>
            <person name="Hunter G."/>
            <person name="Isherwood J."/>
            <person name="James R."/>
            <person name="Johnson C."/>
            <person name="Johnson D."/>
            <person name="Joy A."/>
            <person name="Kay M."/>
            <person name="Kershaw J.K."/>
            <person name="Kibukawa M."/>
            <person name="Kimberley A.M."/>
            <person name="King A."/>
            <person name="Knights A.J."/>
            <person name="Lad H."/>
            <person name="Laird G."/>
            <person name="Lawlor S."/>
            <person name="Leongamornlert D.A."/>
            <person name="Lloyd D.M."/>
            <person name="Loveland J."/>
            <person name="Lovell J."/>
            <person name="Lush M.J."/>
            <person name="Lyne R."/>
            <person name="Martin S."/>
            <person name="Mashreghi-Mohammadi M."/>
            <person name="Matthews L."/>
            <person name="Matthews N.S.W."/>
            <person name="McLaren S."/>
            <person name="Milne S."/>
            <person name="Mistry S."/>
            <person name="Moore M.J.F."/>
            <person name="Nickerson T."/>
            <person name="O'Dell C.N."/>
            <person name="Oliver K."/>
            <person name="Palmeiri A."/>
            <person name="Palmer S.A."/>
            <person name="Parker A."/>
            <person name="Patel D."/>
            <person name="Pearce A.V."/>
            <person name="Peck A.I."/>
            <person name="Pelan S."/>
            <person name="Phelps K."/>
            <person name="Phillimore B.J."/>
            <person name="Plumb R."/>
            <person name="Rajan J."/>
            <person name="Raymond C."/>
            <person name="Rouse G."/>
            <person name="Saenphimmachak C."/>
            <person name="Sehra H.K."/>
            <person name="Sheridan E."/>
            <person name="Shownkeen R."/>
            <person name="Sims S."/>
            <person name="Skuce C.D."/>
            <person name="Smith M."/>
            <person name="Steward C."/>
            <person name="Subramanian S."/>
            <person name="Sycamore N."/>
            <person name="Tracey A."/>
            <person name="Tromans A."/>
            <person name="Van Helmond Z."/>
            <person name="Wall M."/>
            <person name="Wallis J.M."/>
            <person name="White S."/>
            <person name="Whitehead S.L."/>
            <person name="Wilkinson J.E."/>
            <person name="Willey D.L."/>
            <person name="Williams H."/>
            <person name="Wilming L."/>
            <person name="Wray P.W."/>
            <person name="Wu Z."/>
            <person name="Coulson A."/>
            <person name="Vaudin M."/>
            <person name="Sulston J.E."/>
            <person name="Durbin R.M."/>
            <person name="Hubbard T."/>
            <person name="Wooster R."/>
            <person name="Dunham I."/>
            <person name="Carter N.P."/>
            <person name="McVean G."/>
            <person name="Ross M.T."/>
            <person name="Harrow J."/>
            <person name="Olson M.V."/>
            <person name="Beck S."/>
            <person name="Rogers J."/>
            <person name="Bentley D.R."/>
        </authorList>
    </citation>
    <scope>NUCLEOTIDE SEQUENCE [LARGE SCALE GENOMIC DNA]</scope>
</reference>
<reference key="8">
    <citation type="submission" date="2005-07" db="EMBL/GenBank/DDBJ databases">
        <authorList>
            <person name="Mural R.J."/>
            <person name="Istrail S."/>
            <person name="Sutton G.G."/>
            <person name="Florea L."/>
            <person name="Halpern A.L."/>
            <person name="Mobarry C.M."/>
            <person name="Lippert R."/>
            <person name="Walenz B."/>
            <person name="Shatkay H."/>
            <person name="Dew I."/>
            <person name="Miller J.R."/>
            <person name="Flanigan M.J."/>
            <person name="Edwards N.J."/>
            <person name="Bolanos R."/>
            <person name="Fasulo D."/>
            <person name="Halldorsson B.V."/>
            <person name="Hannenhalli S."/>
            <person name="Turner R."/>
            <person name="Yooseph S."/>
            <person name="Lu F."/>
            <person name="Nusskern D.R."/>
            <person name="Shue B.C."/>
            <person name="Zheng X.H."/>
            <person name="Zhong F."/>
            <person name="Delcher A.L."/>
            <person name="Huson D.H."/>
            <person name="Kravitz S.A."/>
            <person name="Mouchard L."/>
            <person name="Reinert K."/>
            <person name="Remington K.A."/>
            <person name="Clark A.G."/>
            <person name="Waterman M.S."/>
            <person name="Eichler E.E."/>
            <person name="Adams M.D."/>
            <person name="Hunkapiller M.W."/>
            <person name="Myers E.W."/>
            <person name="Venter J.C."/>
        </authorList>
    </citation>
    <scope>NUCLEOTIDE SEQUENCE [LARGE SCALE GENOMIC DNA]</scope>
</reference>
<reference key="9">
    <citation type="journal article" date="2004" name="Genome Res.">
        <title>The status, quality, and expansion of the NIH full-length cDNA project: the Mammalian Gene Collection (MGC).</title>
        <authorList>
            <consortium name="The MGC Project Team"/>
        </authorList>
    </citation>
    <scope>NUCLEOTIDE SEQUENCE [LARGE SCALE MRNA]</scope>
    <source>
        <tissue>Muscle</tissue>
    </source>
</reference>
<reference key="10">
    <citation type="submission" date="2001-09" db="EMBL/GenBank/DDBJ databases">
        <authorList>
            <person name="Xu Y."/>
            <person name="Hu X."/>
            <person name="Zhou Y."/>
            <person name="Peng X."/>
            <person name="Yuan J."/>
            <person name="Qiang B."/>
        </authorList>
    </citation>
    <scope>NUCLEOTIDE SEQUENCE OF 1-390</scope>
</reference>
<reference key="11">
    <citation type="journal article" date="1996" name="Nat. Med.">
        <title>Alzheimer-associated presenilins 1 and 2: neuronal expression in brain and localization to intracellular membranes in mammalian cells.</title>
        <authorList>
            <person name="Kovacs D.M."/>
            <person name="Fausett H.J."/>
            <person name="Page K.J."/>
            <person name="Kim T.-W."/>
            <person name="Moir R.D."/>
            <person name="Merriam D.E."/>
            <person name="Hollister R.D."/>
            <person name="Hallmark O.G."/>
            <person name="Mancini R."/>
            <person name="Felsenstein K.M."/>
            <person name="Hyman B.T."/>
            <person name="Tanzi R.E."/>
            <person name="Wasco W."/>
        </authorList>
    </citation>
    <scope>SUBCELLULAR LOCATION</scope>
    <scope>TISSUE SPECIFICITY</scope>
</reference>
<reference key="12">
    <citation type="journal article" date="1998" name="J. Neurosci.">
        <title>Interaction of presenilins with the filamin family of actin-binding proteins.</title>
        <authorList>
            <person name="Zhang W."/>
            <person name="Han S.W."/>
            <person name="McKeel D.W."/>
            <person name="Goate A."/>
            <person name="Wu J.Y."/>
        </authorList>
    </citation>
    <scope>INTERACTION WITH FLNA AND FLNB</scope>
</reference>
<reference key="13">
    <citation type="journal article" date="1999" name="J. Biol. Chem.">
        <title>A loss of function mutation of presenilin-2 interferes with amyloid beta-peptide production and notch signaling.</title>
        <authorList>
            <person name="Steiner H."/>
            <person name="Duff K."/>
            <person name="Capell A."/>
            <person name="Romig H."/>
            <person name="Grim M.G."/>
            <person name="Lincoln S."/>
            <person name="Hardy J."/>
            <person name="Yu X."/>
            <person name="Picciano M."/>
            <person name="Fechteler K."/>
            <person name="Citron M."/>
            <person name="Kopan R."/>
            <person name="Pesold B."/>
            <person name="Keck S."/>
            <person name="Baader M."/>
            <person name="Tomita T."/>
            <person name="Iwatsubo T."/>
            <person name="Baumeister R."/>
            <person name="Haass C."/>
        </authorList>
    </citation>
    <scope>FUNCTION</scope>
    <scope>ACTIVE SITE ASP-366</scope>
    <scope>MUTAGENESIS OF ASP-366</scope>
</reference>
<reference key="14">
    <citation type="journal article" date="2000" name="J. Biol. Chem.">
        <title>The transmembrane aspartates in presenilin 1 and 2 are obligatory for gamma-secretase activity and amyloid beta-protein generation.</title>
        <authorList>
            <person name="Kimberly W.T."/>
            <person name="Xia W."/>
            <person name="Rahmati T."/>
            <person name="Wolfe M.S."/>
            <person name="Selkoe D.J."/>
        </authorList>
    </citation>
    <scope>FUNCTION</scope>
    <scope>ACTIVE SITES ASP-263 AND ASP-366</scope>
    <scope>MUTAGENESIS OF ASP-263 AND ASP-366</scope>
</reference>
<reference key="15">
    <citation type="journal article" date="2002" name="J. Biol. Chem.">
        <title>Endoplasmic reticulum stress-inducible protein, Herp, enhances presenilin-mediated generation of amyloid beta-protein.</title>
        <authorList>
            <person name="Sai X."/>
            <person name="Kawamura Y."/>
            <person name="Kokame K."/>
            <person name="Yamaguchi H."/>
            <person name="Shiraishi H."/>
            <person name="Suzuki R."/>
            <person name="Suzuki T."/>
            <person name="Kawaichi M."/>
            <person name="Miyata T."/>
            <person name="Kitamura T."/>
            <person name="De Strooper B."/>
            <person name="Yanagisawa K."/>
            <person name="Komano H."/>
        </authorList>
    </citation>
    <scope>INTERACTION WITH HERPUD1</scope>
</reference>
<reference key="16">
    <citation type="journal article" date="1998" name="Hum. Mutat.">
        <title>Presenilin mutations in Alzheimer's disease.</title>
        <authorList>
            <person name="Cruts M."/>
            <person name="van Broeckhoven C."/>
        </authorList>
    </citation>
    <scope>REVIEW ON VARIANTS</scope>
</reference>
<reference key="17">
    <citation type="journal article" date="2004" name="J. Biol. Chem.">
        <title>Consensus analysis of signal peptide peptidase and homologous human aspartic proteases reveals opposite topology of catalytic domains compared with presenilins.</title>
        <authorList>
            <person name="Friedmann E."/>
            <person name="Lemberg M.K."/>
            <person name="Weihofen A."/>
            <person name="Dev K.K."/>
            <person name="Dengler U."/>
            <person name="Rovelli G."/>
            <person name="Martoglio B."/>
        </authorList>
    </citation>
    <scope>TOPOLOGY</scope>
</reference>
<reference key="18">
    <citation type="journal article" date="2006" name="Cell">
        <title>Presenilins form ER Ca2+ leak channels, a function disrupted by familial Alzheimer's disease-linked mutations.</title>
        <authorList>
            <person name="Tu H."/>
            <person name="Nelson O."/>
            <person name="Bezprozvanny A."/>
            <person name="Wang Z."/>
            <person name="Lee S.F."/>
            <person name="Hao Y.H."/>
            <person name="Serneels L."/>
            <person name="De Strooper B."/>
            <person name="Yu G."/>
            <person name="Bezprozvanny I."/>
        </authorList>
    </citation>
    <scope>FUNCTION</scope>
    <scope>CHARACTERIZATION OF VARIANT AD4 ILE-141</scope>
</reference>
<reference key="19">
    <citation type="journal article" date="2008" name="Proc. Natl. Acad. Sci. U.S.A.">
        <title>A quantitative atlas of mitotic phosphorylation.</title>
        <authorList>
            <person name="Dephoure N."/>
            <person name="Zhou C."/>
            <person name="Villen J."/>
            <person name="Beausoleil S.A."/>
            <person name="Bakalarski C.E."/>
            <person name="Elledge S.J."/>
            <person name="Gygi S.P."/>
        </authorList>
    </citation>
    <scope>IDENTIFICATION BY MASS SPECTROMETRY [LARGE SCALE ANALYSIS]</scope>
    <source>
        <tissue>Cervix carcinoma</tissue>
    </source>
</reference>
<reference key="20">
    <citation type="journal article" date="2009" name="Anal. Chem.">
        <title>Lys-N and trypsin cover complementary parts of the phosphoproteome in a refined SCX-based approach.</title>
        <authorList>
            <person name="Gauci S."/>
            <person name="Helbig A.O."/>
            <person name="Slijper M."/>
            <person name="Krijgsveld J."/>
            <person name="Heck A.J."/>
            <person name="Mohammed S."/>
        </authorList>
    </citation>
    <scope>IDENTIFICATION BY MASS SPECTROMETRY [LARGE SCALE ANALYSIS]</scope>
</reference>
<reference key="21">
    <citation type="journal article" date="2010" name="Sci. Signal.">
        <title>Quantitative phosphoproteomics reveals widespread full phosphorylation site occupancy during mitosis.</title>
        <authorList>
            <person name="Olsen J.V."/>
            <person name="Vermeulen M."/>
            <person name="Santamaria A."/>
            <person name="Kumar C."/>
            <person name="Miller M.L."/>
            <person name="Jensen L.J."/>
            <person name="Gnad F."/>
            <person name="Cox J."/>
            <person name="Jensen T.S."/>
            <person name="Nigg E.A."/>
            <person name="Brunak S."/>
            <person name="Mann M."/>
        </authorList>
    </citation>
    <scope>PHOSPHORYLATION [LARGE SCALE ANALYSIS] AT SER-22 AND SER-25</scope>
    <scope>IDENTIFICATION BY MASS SPECTROMETRY [LARGE SCALE ANALYSIS]</scope>
    <source>
        <tissue>Cervix carcinoma</tissue>
    </source>
</reference>
<reference key="22">
    <citation type="journal article" date="2011" name="Proc. Natl. Acad. Sci. U.S.A.">
        <title>Presenilin 2 modulates endoplasmic reticulum (ER)-mitochondria interactions and Ca2+ cross-talk.</title>
        <authorList>
            <person name="Zampese E."/>
            <person name="Fasolato C."/>
            <person name="Kipanyula M.J."/>
            <person name="Bortolozzi M."/>
            <person name="Pozzan T."/>
            <person name="Pizzo P."/>
        </authorList>
    </citation>
    <scope>FUNCTION</scope>
    <scope>CHARACTERIZATION OF VARIANTS AD4 ARG-122 AND ILE-141</scope>
    <scope>MUTAGENESIS OF ASP-366</scope>
</reference>
<reference key="23">
    <citation type="journal article" date="2013" name="J. Proteome Res.">
        <title>Toward a comprehensive characterization of a human cancer cell phosphoproteome.</title>
        <authorList>
            <person name="Zhou H."/>
            <person name="Di Palma S."/>
            <person name="Preisinger C."/>
            <person name="Peng M."/>
            <person name="Polat A.N."/>
            <person name="Heck A.J."/>
            <person name="Mohammed S."/>
        </authorList>
    </citation>
    <scope>PHOSPHORYLATION [LARGE SCALE ANALYSIS] AT SER-22 AND SER-25</scope>
    <scope>IDENTIFICATION BY MASS SPECTROMETRY [LARGE SCALE ANALYSIS]</scope>
    <source>
        <tissue>Cervix carcinoma</tissue>
        <tissue>Erythroleukemia</tissue>
    </source>
</reference>
<reference key="24">
    <citation type="journal article" date="2014" name="J. Proteomics">
        <title>An enzyme assisted RP-RPLC approach for in-depth analysis of human liver phosphoproteome.</title>
        <authorList>
            <person name="Bian Y."/>
            <person name="Song C."/>
            <person name="Cheng K."/>
            <person name="Dong M."/>
            <person name="Wang F."/>
            <person name="Huang J."/>
            <person name="Sun D."/>
            <person name="Wang L."/>
            <person name="Ye M."/>
            <person name="Zou H."/>
        </authorList>
    </citation>
    <scope>IDENTIFICATION BY MASS SPECTROMETRY [LARGE SCALE ANALYSIS]</scope>
    <source>
        <tissue>Liver</tissue>
    </source>
</reference>
<reference key="25">
    <citation type="journal article" date="1998" name="Hum. Mol. Genet.">
        <title>Estimation of the genetic contribution of presenilin-1 and -2 mutations in a population-based study of presenile Alzheimer disease.</title>
        <authorList>
            <person name="Cruts M."/>
            <person name="van Duijn C.M."/>
            <person name="Backhovens H."/>
            <person name="van den Broeck M."/>
            <person name="Wehnert A."/>
            <person name="Serneels S."/>
            <person name="Sherrington R."/>
            <person name="Hutton M."/>
            <person name="Hardy J."/>
            <person name="St George-Hyslop P.H."/>
            <person name="Hofman A."/>
            <person name="van Broeckhoven C."/>
        </authorList>
    </citation>
    <scope>VARIANT AD4 HIS-62</scope>
</reference>
<reference key="26">
    <citation type="journal article" date="1998" name="Neurogenetics">
        <title>A novel mutation in the predicted TM2 domain of the presenilin 2 gene in Spanish patient with late-onset Alzheimer's disease.</title>
        <authorList>
            <person name="Lao J.I."/>
            <person name="Beyer K."/>
            <person name="Fernandez-Novoa L."/>
            <person name="Cacabelos R."/>
        </authorList>
    </citation>
    <scope>VARIANT AD4 ILE-148</scope>
</reference>
<reference key="27">
    <citation type="journal article" date="2000" name="Am. J. Hum. Genet.">
        <title>High prevalence of pathogenic mutations in patients with early-onset dementia detected by sequence analyses of four different genes.</title>
        <authorList>
            <person name="Finckh U."/>
            <person name="Mueller-Thomsen T."/>
            <person name="Mann U."/>
            <person name="Eggers C."/>
            <person name="Marksteiner J."/>
            <person name="Meins W."/>
            <person name="Binetti G."/>
            <person name="Alberici A."/>
            <person name="Hock C."/>
            <person name="Nitsch R.M."/>
            <person name="Gal A."/>
        </authorList>
    </citation>
    <scope>VARIANTS AD4 PRO-122 AND ILE-239</scope>
</reference>
<reference key="28">
    <citation type="journal article" date="2003" name="Ann. Neurol.">
        <title>Atypical dementia associated with a novel presenilin-2 mutation.</title>
        <authorList>
            <person name="Binetti G."/>
            <person name="Signorini S."/>
            <person name="Squitti R."/>
            <person name="Alberici A."/>
            <person name="Benussi L."/>
            <person name="Cassetta E."/>
            <person name="Frisoni G.B."/>
            <person name="Barbiero L."/>
            <person name="Feudatari E."/>
            <person name="Nicosia F."/>
            <person name="Testa C."/>
            <person name="Zanetti O."/>
            <person name="Gennarelli M."/>
            <person name="Perani D."/>
            <person name="Anchisi D."/>
            <person name="Ghidoni R."/>
            <person name="Rossini P.M."/>
        </authorList>
    </citation>
    <scope>VARIANT AD4 ARG-122</scope>
</reference>
<reference key="29">
    <citation type="journal article" date="2006" name="Am. J. Hum. Genet.">
        <title>Mutations of presenilin genes in dilated cardiomyopathy and heart failure.</title>
        <authorList>
            <person name="Li D."/>
            <person name="Parks S.B."/>
            <person name="Kushner J.D."/>
            <person name="Nauman D."/>
            <person name="Burgess D."/>
            <person name="Ludwigsen S."/>
            <person name="Partain J."/>
            <person name="Nixon R.R."/>
            <person name="Allen C.N."/>
            <person name="Irwin R.P."/>
            <person name="Jakobs P.M."/>
            <person name="Litt M."/>
            <person name="Hershberger R.E."/>
        </authorList>
    </citation>
    <scope>VARIANT CMD1V LEU-130</scope>
</reference>
<reference key="30">
    <citation type="journal article" date="2006" name="Hum. Mutat.">
        <title>Mean age-of-onset of familial alzheimer disease caused by presenilin mutations correlates with both increased Abeta42 and decreased Abeta40.</title>
        <authorList>
            <person name="Kumar-Singh S."/>
            <person name="Theuns J."/>
            <person name="Van Broeck B."/>
            <person name="Pirici D."/>
            <person name="Vennekens K."/>
            <person name="Corsmit E."/>
            <person name="Cruts M."/>
            <person name="Dermaut B."/>
            <person name="Wang R."/>
            <person name="Van Broeckhoven C."/>
        </authorList>
    </citation>
    <scope>CHARACTERIZATION OF VARIANT AD4 ILE-141</scope>
</reference>
<reference key="31">
    <citation type="journal article" date="2011" name="J. Neurol.">
        <title>Presenilin 2 mutation R71W in an Italian early-onset sporadic Alzheimer's disease case.</title>
        <authorList>
            <person name="Piscopo P."/>
            <person name="Talarico G."/>
            <person name="Malvezzi-Campeggi L."/>
            <person name="Crestini A."/>
            <person name="Rivabene R."/>
            <person name="Gasparini M."/>
            <person name="Tosto G."/>
            <person name="Vanacore N."/>
            <person name="Lenzi G.L."/>
            <person name="Bruno G."/>
            <person name="Confaloni A."/>
        </authorList>
    </citation>
    <scope>VARIANT AD4 TRP-71</scope>
</reference>
<reference key="32">
    <citation type="journal article" date="2012" name="Neurobiol. Aging">
        <title>Identification of PSEN1 and PSEN2 gene mutations and variants in Turkish dementia patients.</title>
        <authorList>
            <person name="Lohmann E."/>
            <person name="Guerreiro R.J."/>
            <person name="Erginel-Unaltuna N."/>
            <person name="Gurunlian N."/>
            <person name="Bilgic B."/>
            <person name="Gurvit H."/>
            <person name="Hanagasi H.A."/>
            <person name="Luu N."/>
            <person name="Emre M."/>
            <person name="Singleton A."/>
        </authorList>
    </citation>
    <scope>VARIANTS AD4 HIS-62; TRP-71 AND LEU-130</scope>
</reference>
<reference key="33">
    <citation type="journal article" date="2014" name="J. Alzheimers Dis.">
        <title>Previously unrecognized missense mutation E126K of PSEN2 segregates with early onset Alzheimer's disease in a family.</title>
        <authorList>
            <person name="Mueller U."/>
            <person name="Winter P."/>
            <person name="Bolender C."/>
            <person name="Nolte D."/>
        </authorList>
    </citation>
    <scope>VARIANT AD4 LYS-126</scope>
</reference>
<reference key="34">
    <citation type="journal article" date="2014" name="Neurobiol. Aging">
        <title>Novel mutation in the PSEN2 gene (N141Y) associated with early-onset autosomal dominant Alzheimer's disease in a Chinese Han family.</title>
        <authorList>
            <person name="Niu F."/>
            <person name="Yu S."/>
            <person name="Zhang Z."/>
            <person name="Yi X."/>
            <person name="Ye L."/>
            <person name="Tang W."/>
            <person name="Qiu C."/>
            <person name="Wen H."/>
            <person name="Sun Y."/>
            <person name="Gao J."/>
            <person name="Guo Y."/>
        </authorList>
    </citation>
    <scope>VARIANT AD4 TYR-141</scope>
</reference>
<feature type="chain" id="PRO_0000025603" description="Presenilin-2 NTF subunit" evidence="1">
    <location>
        <begin position="1"/>
        <end position="297"/>
    </location>
</feature>
<feature type="chain" id="PRO_0000025604" description="Presenilin-2 CTF subunit" evidence="1">
    <location>
        <begin position="298"/>
        <end position="448"/>
    </location>
</feature>
<feature type="topological domain" description="Cytoplasmic" evidence="3">
    <location>
        <begin position="1"/>
        <end position="87"/>
    </location>
</feature>
<feature type="transmembrane region" description="Helical" evidence="3">
    <location>
        <begin position="88"/>
        <end position="108"/>
    </location>
</feature>
<feature type="topological domain" description="Lumenal" evidence="3">
    <location>
        <begin position="109"/>
        <end position="138"/>
    </location>
</feature>
<feature type="transmembrane region" description="Helical" evidence="3">
    <location>
        <begin position="139"/>
        <end position="159"/>
    </location>
</feature>
<feature type="topological domain" description="Cytoplasmic" evidence="3">
    <location>
        <begin position="160"/>
        <end position="166"/>
    </location>
</feature>
<feature type="transmembrane region" description="Helical" evidence="3">
    <location>
        <begin position="167"/>
        <end position="187"/>
    </location>
</feature>
<feature type="topological domain" description="Lumenal" evidence="3">
    <location>
        <begin position="188"/>
        <end position="200"/>
    </location>
</feature>
<feature type="transmembrane region" description="Helical" evidence="3">
    <location>
        <begin position="201"/>
        <end position="221"/>
    </location>
</feature>
<feature type="topological domain" description="Cytoplasmic" evidence="3">
    <location>
        <begin position="222"/>
        <end position="223"/>
    </location>
</feature>
<feature type="transmembrane region" description="Helical" evidence="3">
    <location>
        <begin position="224"/>
        <end position="244"/>
    </location>
</feature>
<feature type="topological domain" description="Lumenal" evidence="3">
    <location>
        <begin position="245"/>
        <end position="249"/>
    </location>
</feature>
<feature type="transmembrane region" description="Helical" evidence="3">
    <location>
        <begin position="250"/>
        <end position="270"/>
    </location>
</feature>
<feature type="topological domain" description="Cytoplasmic" evidence="3">
    <location>
        <begin position="271"/>
        <end position="361"/>
    </location>
</feature>
<feature type="transmembrane region" description="Helical" evidence="3">
    <location>
        <begin position="362"/>
        <end position="382"/>
    </location>
</feature>
<feature type="topological domain" description="Lumenal" evidence="3">
    <location>
        <begin position="383"/>
        <end position="388"/>
    </location>
</feature>
<feature type="transmembrane region" description="Helical" evidence="3">
    <location>
        <begin position="389"/>
        <end position="409"/>
    </location>
</feature>
<feature type="topological domain" description="Cytoplasmic" evidence="3">
    <location>
        <begin position="410"/>
        <end position="413"/>
    </location>
</feature>
<feature type="intramembrane region" description="Helical" evidence="3">
    <location>
        <begin position="414"/>
        <end position="434"/>
    </location>
</feature>
<feature type="topological domain" description="Cytoplasmic" evidence="3">
    <location>
        <begin position="435"/>
        <end position="448"/>
    </location>
</feature>
<feature type="region of interest" description="Disordered" evidence="4">
    <location>
        <begin position="1"/>
        <end position="70"/>
    </location>
</feature>
<feature type="short sequence motif" description="PAL">
    <location>
        <begin position="414"/>
        <end position="416"/>
    </location>
</feature>
<feature type="compositionally biased region" description="Polar residues" evidence="4">
    <location>
        <begin position="19"/>
        <end position="30"/>
    </location>
</feature>
<feature type="active site" evidence="27">
    <location>
        <position position="263"/>
    </location>
</feature>
<feature type="active site" evidence="26 27">
    <location>
        <position position="366"/>
    </location>
</feature>
<feature type="modified residue" description="Phosphoserine" evidence="28 29">
    <location>
        <position position="22"/>
    </location>
</feature>
<feature type="modified residue" description="Phosphoserine" evidence="28 29">
    <location>
        <position position="25"/>
    </location>
</feature>
<feature type="modified residue" description="Phosphoserine" evidence="2">
    <location>
        <position position="30"/>
    </location>
</feature>
<feature type="splice variant" id="VSP_005194" description="In isoform 2." evidence="25">
    <location>
        <begin position="263"/>
        <end position="296"/>
    </location>
</feature>
<feature type="splice variant" id="VSP_043648" description="In isoform 3." evidence="24">
    <location>
        <position position="324"/>
    </location>
</feature>
<feature type="sequence variant" id="VAR_006461" description="In AD4; likely benign; dbSNP:rs58973334." evidence="16 22">
    <original>R</original>
    <variation>H</variation>
    <location>
        <position position="62"/>
    </location>
</feature>
<feature type="sequence variant" id="VAR_070027" description="In AD4; uncertain significance; dbSNP:rs140501902." evidence="15 16">
    <original>R</original>
    <variation>W</variation>
    <location>
        <position position="71"/>
    </location>
</feature>
<feature type="sequence variant" id="VAR_009214" description="In AD4; dbSNP:rs63749851." evidence="6">
    <original>T</original>
    <variation>P</variation>
    <location>
        <position position="122"/>
    </location>
</feature>
<feature type="sequence variant" id="VAR_081261" description="In AD4; increased mitochondrion-endoplasmic reticulum membrane tethering resulting in increased calcium transfer to mitochondria; dbSNP:rs28936380." evidence="10 14">
    <original>T</original>
    <variation>R</variation>
    <location>
        <position position="122"/>
    </location>
</feature>
<feature type="sequence variant" id="VAR_081262" description="In AD4; uncertain significance." evidence="18">
    <original>E</original>
    <variation>K</variation>
    <location>
        <position position="126"/>
    </location>
</feature>
<feature type="sequence variant" id="VAR_064903" description="In CMD1V and AD4; uncertain significance; dbSNP:rs63750197." evidence="13 16">
    <original>S</original>
    <variation>L</variation>
    <location>
        <position position="130"/>
    </location>
</feature>
<feature type="sequence variant" id="VAR_006462" description="In AD4; results in altered amyloid-beta production and increased amyloid-beta 42/amyloid-beta 40 ratio; loss of function as calcium-leak channel; results in calcium overload in the endoplasmic reticulum; increased mitochondrion-endoplasmic reticulum membrane tethering resulting in increased calcium transfer to mitochondria; dbSNP:rs63750215." evidence="11 12 14 19 20">
    <original>N</original>
    <variation>I</variation>
    <location>
        <position position="141"/>
    </location>
</feature>
<feature type="sequence variant" id="VAR_081263" description="In AD4; dbSNP:rs61761208." evidence="17">
    <original>N</original>
    <variation>Y</variation>
    <location>
        <position position="141"/>
    </location>
</feature>
<feature type="sequence variant" id="VAR_007958" description="In AD4; late-onset Alzheimer disease; dbSNP:rs63750812." evidence="8">
    <original>V</original>
    <variation>I</variation>
    <location>
        <position position="148"/>
    </location>
</feature>
<feature type="sequence variant" id="VAR_009215" description="In AD4; dbSNP:rs63749884." evidence="6">
    <original>M</original>
    <variation>I</variation>
    <location>
        <position position="239"/>
    </location>
</feature>
<feature type="sequence variant" id="VAR_006463" description="In AD4; dbSNP:rs28936379." evidence="20">
    <original>M</original>
    <variation>V</variation>
    <location>
        <position position="239"/>
    </location>
</feature>
<feature type="mutagenesis site" description="Reduces production of amyloid-beta in APP processing." evidence="7">
    <original>D</original>
    <variation>A</variation>
    <location>
        <position position="263"/>
    </location>
</feature>
<feature type="mutagenesis site" description="Reduces production of amyloid-beta in APP processing and of NICD in NOTCH1 processing. Increased mitochondrion-endoplasmic reticulum membrane tethering resulting in increased calcium transfer to mitochondria." evidence="5 7 14">
    <original>D</original>
    <variation>A</variation>
    <location>
        <position position="366"/>
    </location>
</feature>
<feature type="sequence conflict" description="In Ref. 1 and 10." evidence="25" ref="1 10">
    <original>P</original>
    <variation>T</variation>
    <location>
        <position position="123"/>
    </location>
</feature>
<feature type="sequence conflict" description="In Ref. 10; AAL16812." evidence="25" ref="10">
    <original>S</original>
    <variation>L</variation>
    <location>
        <position position="295"/>
    </location>
</feature>
<feature type="sequence conflict" description="In Ref. 3; AAC50290." evidence="25" ref="3">
    <location>
        <position position="325"/>
    </location>
</feature>
<feature type="sequence conflict" description="In Ref. 3; AAC50290." evidence="25" ref="3">
    <original>R</original>
    <variation>SQG</variation>
    <location>
        <position position="358"/>
    </location>
</feature>
<feature type="sequence conflict" description="In Ref. 3." evidence="25" ref="3">
    <original>NLVRPFMDTLASHQLYI</original>
    <variation>RKHSRFIQMN</variation>
    <location>
        <begin position="432"/>
        <end position="448"/>
    </location>
</feature>
<feature type="helix" evidence="30">
    <location>
        <begin position="86"/>
        <end position="106"/>
    </location>
</feature>
<feature type="turn" evidence="30">
    <location>
        <begin position="107"/>
        <end position="109"/>
    </location>
</feature>
<feature type="turn" evidence="30">
    <location>
        <begin position="170"/>
        <end position="173"/>
    </location>
</feature>
<feature type="helix" evidence="30">
    <location>
        <begin position="174"/>
        <end position="180"/>
    </location>
</feature>
<feature type="turn" evidence="30">
    <location>
        <begin position="181"/>
        <end position="183"/>
    </location>
</feature>
<feature type="helix" evidence="30">
    <location>
        <begin position="184"/>
        <end position="195"/>
    </location>
</feature>
<feature type="helix" evidence="30">
    <location>
        <begin position="201"/>
        <end position="219"/>
    </location>
</feature>
<feature type="helix" evidence="30">
    <location>
        <begin position="225"/>
        <end position="245"/>
    </location>
</feature>
<feature type="turn" evidence="30">
    <location>
        <begin position="249"/>
        <end position="251"/>
    </location>
</feature>
<feature type="helix" evidence="30">
    <location>
        <begin position="252"/>
        <end position="261"/>
    </location>
</feature>
<feature type="helix" evidence="30">
    <location>
        <begin position="364"/>
        <end position="377"/>
    </location>
</feature>
<feature type="strand" evidence="30">
    <location>
        <begin position="380"/>
        <end position="383"/>
    </location>
</feature>
<feature type="helix" evidence="30">
    <location>
        <begin position="385"/>
        <end position="409"/>
    </location>
</feature>
<feature type="helix" evidence="30">
    <location>
        <begin position="416"/>
        <end position="430"/>
    </location>
</feature>
<feature type="turn" evidence="30">
    <location>
        <begin position="431"/>
        <end position="434"/>
    </location>
</feature>
<feature type="helix" evidence="30">
    <location>
        <begin position="435"/>
        <end position="443"/>
    </location>
</feature>
<organism>
    <name type="scientific">Homo sapiens</name>
    <name type="common">Human</name>
    <dbReference type="NCBI Taxonomy" id="9606"/>
    <lineage>
        <taxon>Eukaryota</taxon>
        <taxon>Metazoa</taxon>
        <taxon>Chordata</taxon>
        <taxon>Craniata</taxon>
        <taxon>Vertebrata</taxon>
        <taxon>Euteleostomi</taxon>
        <taxon>Mammalia</taxon>
        <taxon>Eutheria</taxon>
        <taxon>Euarchontoglires</taxon>
        <taxon>Primates</taxon>
        <taxon>Haplorrhini</taxon>
        <taxon>Catarrhini</taxon>
        <taxon>Hominidae</taxon>
        <taxon>Homo</taxon>
    </lineage>
</organism>
<dbReference type="EC" id="3.4.23.-"/>
<dbReference type="EMBL" id="L43964">
    <property type="protein sequence ID" value="AAB59557.1"/>
    <property type="molecule type" value="mRNA"/>
</dbReference>
<dbReference type="EMBL" id="L44577">
    <property type="protein sequence ID" value="AAC42012.1"/>
    <property type="molecule type" value="mRNA"/>
</dbReference>
<dbReference type="EMBL" id="U34349">
    <property type="protein sequence ID" value="AAC50290.1"/>
    <property type="molecule type" value="mRNA"/>
</dbReference>
<dbReference type="EMBL" id="U50871">
    <property type="protein sequence ID" value="AAB50054.1"/>
    <property type="molecule type" value="Genomic_DNA"/>
</dbReference>
<dbReference type="EMBL" id="BT006984">
    <property type="protein sequence ID" value="AAP35630.1"/>
    <property type="molecule type" value="mRNA"/>
</dbReference>
<dbReference type="EMBL" id="AK292299">
    <property type="protein sequence ID" value="BAF84988.1"/>
    <property type="molecule type" value="mRNA"/>
</dbReference>
<dbReference type="EMBL" id="AL391628">
    <property type="status" value="NOT_ANNOTATED_CDS"/>
    <property type="molecule type" value="Genomic_DNA"/>
</dbReference>
<dbReference type="EMBL" id="CH471098">
    <property type="protein sequence ID" value="EAW69798.1"/>
    <property type="molecule type" value="Genomic_DNA"/>
</dbReference>
<dbReference type="EMBL" id="CH471098">
    <property type="protein sequence ID" value="EAW69800.1"/>
    <property type="molecule type" value="Genomic_DNA"/>
</dbReference>
<dbReference type="EMBL" id="BC006365">
    <property type="protein sequence ID" value="AAH06365.1"/>
    <property type="molecule type" value="mRNA"/>
</dbReference>
<dbReference type="EMBL" id="AF416718">
    <property type="protein sequence ID" value="AAL16812.1"/>
    <property type="molecule type" value="mRNA"/>
</dbReference>
<dbReference type="CCDS" id="CCDS1556.1">
    <molecule id="P49810-1"/>
</dbReference>
<dbReference type="CCDS" id="CCDS44324.1">
    <molecule id="P49810-3"/>
</dbReference>
<dbReference type="PIR" id="A56993">
    <property type="entry name" value="A56993"/>
</dbReference>
<dbReference type="PIR" id="I39174">
    <property type="entry name" value="I39174"/>
</dbReference>
<dbReference type="RefSeq" id="NP_000438.2">
    <molecule id="P49810-1"/>
    <property type="nucleotide sequence ID" value="NM_000447.3"/>
</dbReference>
<dbReference type="RefSeq" id="NP_036618.2">
    <molecule id="P49810-3"/>
    <property type="nucleotide sequence ID" value="NM_012486.3"/>
</dbReference>
<dbReference type="RefSeq" id="XP_005273256.1">
    <molecule id="P49810-1"/>
    <property type="nucleotide sequence ID" value="XM_005273199.5"/>
</dbReference>
<dbReference type="RefSeq" id="XP_016857324.1">
    <molecule id="P49810-1"/>
    <property type="nucleotide sequence ID" value="XM_017001835.2"/>
</dbReference>
<dbReference type="RefSeq" id="XP_016857325.1">
    <molecule id="P49810-3"/>
    <property type="nucleotide sequence ID" value="XM_017001836.2"/>
</dbReference>
<dbReference type="RefSeq" id="XP_047281552.1">
    <molecule id="P49810-1"/>
    <property type="nucleotide sequence ID" value="XM_047425596.1"/>
</dbReference>
<dbReference type="RefSeq" id="XP_047281553.1">
    <molecule id="P49810-3"/>
    <property type="nucleotide sequence ID" value="XM_047425597.1"/>
</dbReference>
<dbReference type="RefSeq" id="XP_047281557.1">
    <molecule id="P49810-3"/>
    <property type="nucleotide sequence ID" value="XM_047425601.1"/>
</dbReference>
<dbReference type="RefSeq" id="XP_054193713.1">
    <molecule id="P49810-1"/>
    <property type="nucleotide sequence ID" value="XM_054337738.1"/>
</dbReference>
<dbReference type="RefSeq" id="XP_054193714.1">
    <molecule id="P49810-1"/>
    <property type="nucleotide sequence ID" value="XM_054337739.1"/>
</dbReference>
<dbReference type="RefSeq" id="XP_054193715.1">
    <molecule id="P49810-3"/>
    <property type="nucleotide sequence ID" value="XM_054337740.1"/>
</dbReference>
<dbReference type="RefSeq" id="XP_054193716.1">
    <molecule id="P49810-3"/>
    <property type="nucleotide sequence ID" value="XM_054337741.1"/>
</dbReference>
<dbReference type="PDB" id="7Y5X">
    <property type="method" value="EM"/>
    <property type="resolution" value="3.00 A"/>
    <property type="chains" value="B=1-448"/>
</dbReference>
<dbReference type="PDB" id="7Y5Z">
    <property type="method" value="EM"/>
    <property type="resolution" value="3.40 A"/>
    <property type="chains" value="B=1-448"/>
</dbReference>
<dbReference type="PDBsum" id="7Y5X"/>
<dbReference type="PDBsum" id="7Y5Z"/>
<dbReference type="EMDB" id="EMD-33628"/>
<dbReference type="EMDB" id="EMD-33629"/>
<dbReference type="PCDDB" id="P49810"/>
<dbReference type="SMR" id="P49810"/>
<dbReference type="BioGRID" id="111643">
    <property type="interactions" value="72"/>
</dbReference>
<dbReference type="ComplexPortal" id="CPX-4231">
    <property type="entry name" value="Gamma-secretase complex, APH1A-PSEN2 variant"/>
</dbReference>
<dbReference type="ComplexPortal" id="CPX-4232">
    <property type="entry name" value="Gamma-secretase complex, APH1B-PSEN2 variant"/>
</dbReference>
<dbReference type="CORUM" id="P49810"/>
<dbReference type="FunCoup" id="P49810">
    <property type="interactions" value="386"/>
</dbReference>
<dbReference type="IntAct" id="P49810">
    <property type="interactions" value="66"/>
</dbReference>
<dbReference type="MINT" id="P49810"/>
<dbReference type="STRING" id="9606.ENSP00000355747"/>
<dbReference type="BindingDB" id="P49810"/>
<dbReference type="ChEMBL" id="CHEMBL3708"/>
<dbReference type="DrugBank" id="DB16159">
    <property type="generic name" value="Esflurbiprofen"/>
</dbReference>
<dbReference type="DrugBank" id="DB12005">
    <property type="generic name" value="Nirogacestat"/>
</dbReference>
<dbReference type="DrugBank" id="DB05289">
    <property type="generic name" value="Tarenflurbil"/>
</dbReference>
<dbReference type="MEROPS" id="A22.002"/>
<dbReference type="TCDB" id="1.A.54.1.2">
    <property type="family name" value="the presenilin er ca(2+) leak channel (presenilin) family"/>
</dbReference>
<dbReference type="GlyGen" id="P49810">
    <property type="glycosylation" value="1 site"/>
</dbReference>
<dbReference type="iPTMnet" id="P49810"/>
<dbReference type="PhosphoSitePlus" id="P49810"/>
<dbReference type="SwissPalm" id="P49810"/>
<dbReference type="BioMuta" id="PSEN2"/>
<dbReference type="DMDM" id="1709858"/>
<dbReference type="jPOST" id="P49810"/>
<dbReference type="MassIVE" id="P49810"/>
<dbReference type="PaxDb" id="9606-ENSP00000355747"/>
<dbReference type="PeptideAtlas" id="P49810"/>
<dbReference type="ProteomicsDB" id="56139">
    <molecule id="P49810-1"/>
</dbReference>
<dbReference type="ProteomicsDB" id="56140">
    <molecule id="P49810-2"/>
</dbReference>
<dbReference type="ProteomicsDB" id="56141">
    <molecule id="P49810-3"/>
</dbReference>
<dbReference type="Pumba" id="P49810"/>
<dbReference type="Antibodypedia" id="4424">
    <property type="antibodies" value="450 antibodies from 41 providers"/>
</dbReference>
<dbReference type="DNASU" id="5664"/>
<dbReference type="Ensembl" id="ENST00000366782.6">
    <molecule id="P49810-1"/>
    <property type="protein sequence ID" value="ENSP00000355746.2"/>
    <property type="gene ID" value="ENSG00000143801.18"/>
</dbReference>
<dbReference type="Ensembl" id="ENST00000366783.8">
    <molecule id="P49810-1"/>
    <property type="protein sequence ID" value="ENSP00000355747.3"/>
    <property type="gene ID" value="ENSG00000143801.18"/>
</dbReference>
<dbReference type="Ensembl" id="ENST00000422240.6">
    <molecule id="P49810-3"/>
    <property type="protein sequence ID" value="ENSP00000403737.2"/>
    <property type="gene ID" value="ENSG00000143801.18"/>
</dbReference>
<dbReference type="Ensembl" id="ENST00000524196.6">
    <molecule id="P49810-1"/>
    <property type="protein sequence ID" value="ENSP00000429036.2"/>
    <property type="gene ID" value="ENSG00000143801.18"/>
</dbReference>
<dbReference type="Ensembl" id="ENST00000626989.3">
    <molecule id="P49810-1"/>
    <property type="protein sequence ID" value="ENSP00000486498.2"/>
    <property type="gene ID" value="ENSG00000143801.18"/>
</dbReference>
<dbReference type="Ensembl" id="ENST00000677414.1">
    <molecule id="P49810-1"/>
    <property type="protein sequence ID" value="ENSP00000503116.1"/>
    <property type="gene ID" value="ENSG00000143801.18"/>
</dbReference>
<dbReference type="Ensembl" id="ENST00000678233.1">
    <molecule id="P49810-1"/>
    <property type="protein sequence ID" value="ENSP00000504728.1"/>
    <property type="gene ID" value="ENSG00000143801.18"/>
</dbReference>
<dbReference type="Ensembl" id="ENST00000679088.1">
    <molecule id="P49810-1"/>
    <property type="protein sequence ID" value="ENSP00000504727.1"/>
    <property type="gene ID" value="ENSG00000143801.18"/>
</dbReference>
<dbReference type="Ensembl" id="ENST00000679098.1">
    <molecule id="P49810-1"/>
    <property type="protein sequence ID" value="ENSP00000504303.1"/>
    <property type="gene ID" value="ENSG00000143801.18"/>
</dbReference>
<dbReference type="GeneID" id="5664"/>
<dbReference type="KEGG" id="hsa:5664"/>
<dbReference type="MANE-Select" id="ENST00000366783.8">
    <property type="protein sequence ID" value="ENSP00000355747.3"/>
    <property type="RefSeq nucleotide sequence ID" value="NM_000447.3"/>
    <property type="RefSeq protein sequence ID" value="NP_000438.2"/>
</dbReference>
<dbReference type="UCSC" id="uc009xeo.2">
    <molecule id="P49810-1"/>
    <property type="organism name" value="human"/>
</dbReference>
<dbReference type="AGR" id="HGNC:9509"/>
<dbReference type="CTD" id="5664"/>
<dbReference type="DisGeNET" id="5664"/>
<dbReference type="GeneCards" id="PSEN2"/>
<dbReference type="GeneReviews" id="PSEN2"/>
<dbReference type="HGNC" id="HGNC:9509">
    <property type="gene designation" value="PSEN2"/>
</dbReference>
<dbReference type="HPA" id="ENSG00000143801">
    <property type="expression patterns" value="Low tissue specificity"/>
</dbReference>
<dbReference type="MalaCards" id="PSEN2"/>
<dbReference type="MIM" id="600759">
    <property type="type" value="gene"/>
</dbReference>
<dbReference type="MIM" id="606889">
    <property type="type" value="phenotype"/>
</dbReference>
<dbReference type="MIM" id="613697">
    <property type="type" value="phenotype"/>
</dbReference>
<dbReference type="neXtProt" id="NX_P49810"/>
<dbReference type="OpenTargets" id="ENSG00000143801"/>
<dbReference type="Orphanet" id="1020">
    <property type="disease" value="Early-onset autosomal dominant Alzheimer disease"/>
</dbReference>
<dbReference type="Orphanet" id="154">
    <property type="disease" value="Familial isolated dilated cardiomyopathy"/>
</dbReference>
<dbReference type="PharmGKB" id="PA33856"/>
<dbReference type="VEuPathDB" id="HostDB:ENSG00000143801"/>
<dbReference type="eggNOG" id="KOG2736">
    <property type="taxonomic scope" value="Eukaryota"/>
</dbReference>
<dbReference type="GeneTree" id="ENSGT00940000157923"/>
<dbReference type="HOGENOM" id="CLU_022975_3_1_1"/>
<dbReference type="InParanoid" id="P49810"/>
<dbReference type="OMA" id="WTTITFC"/>
<dbReference type="OrthoDB" id="20287at2759"/>
<dbReference type="PAN-GO" id="P49810">
    <property type="GO annotations" value="22 GO annotations based on evolutionary models"/>
</dbReference>
<dbReference type="PhylomeDB" id="P49810"/>
<dbReference type="TreeFam" id="TF315040"/>
<dbReference type="PathwayCommons" id="P49810"/>
<dbReference type="Reactome" id="R-HSA-1251985">
    <property type="pathway name" value="Nuclear signaling by ERBB4"/>
</dbReference>
<dbReference type="Reactome" id="R-HSA-193692">
    <property type="pathway name" value="Regulated proteolysis of p75NTR"/>
</dbReference>
<dbReference type="Reactome" id="R-HSA-205043">
    <property type="pathway name" value="NRIF signals cell death from the nucleus"/>
</dbReference>
<dbReference type="Reactome" id="R-HSA-2122948">
    <property type="pathway name" value="Activated NOTCH1 Transmits Signal to the Nucleus"/>
</dbReference>
<dbReference type="Reactome" id="R-HSA-2644606">
    <property type="pathway name" value="Constitutive Signaling by NOTCH1 PEST Domain Mutants"/>
</dbReference>
<dbReference type="Reactome" id="R-HSA-2894862">
    <property type="pathway name" value="Constitutive Signaling by NOTCH1 HD+PEST Domain Mutants"/>
</dbReference>
<dbReference type="Reactome" id="R-HSA-2979096">
    <property type="pathway name" value="NOTCH2 Activation and Transmission of Signal to the Nucleus"/>
</dbReference>
<dbReference type="Reactome" id="R-HSA-3928665">
    <property type="pathway name" value="EPH-ephrin mediated repulsion of cells"/>
</dbReference>
<dbReference type="Reactome" id="R-HSA-9013507">
    <property type="pathway name" value="NOTCH3 Activation and Transmission of Signal to the Nucleus"/>
</dbReference>
<dbReference type="Reactome" id="R-HSA-9013700">
    <property type="pathway name" value="NOTCH4 Activation and Transmission of Signal to the Nucleus"/>
</dbReference>
<dbReference type="Reactome" id="R-HSA-9017802">
    <property type="pathway name" value="Noncanonical activation of NOTCH3"/>
</dbReference>
<dbReference type="Reactome" id="R-HSA-9839383">
    <property type="pathway name" value="TGFBR3 PTM regulation"/>
</dbReference>
<dbReference type="SignaLink" id="P49810"/>
<dbReference type="SIGNOR" id="P49810"/>
<dbReference type="BioGRID-ORCS" id="5664">
    <property type="hits" value="11 hits in 1154 CRISPR screens"/>
</dbReference>
<dbReference type="CD-CODE" id="8C2F96ED">
    <property type="entry name" value="Centrosome"/>
</dbReference>
<dbReference type="ChiTaRS" id="PSEN2">
    <property type="organism name" value="human"/>
</dbReference>
<dbReference type="GeneWiki" id="PSEN2"/>
<dbReference type="GenomeRNAi" id="5664"/>
<dbReference type="Pharos" id="P49810">
    <property type="development level" value="Tchem"/>
</dbReference>
<dbReference type="PRO" id="PR:P49810"/>
<dbReference type="Proteomes" id="UP000005640">
    <property type="component" value="Chromosome 1"/>
</dbReference>
<dbReference type="RNAct" id="P49810">
    <property type="molecule type" value="protein"/>
</dbReference>
<dbReference type="Bgee" id="ENSG00000143801">
    <property type="expression patterns" value="Expressed in body of pancreas and 98 other cell types or tissues"/>
</dbReference>
<dbReference type="ExpressionAtlas" id="P49810">
    <property type="expression patterns" value="baseline and differential"/>
</dbReference>
<dbReference type="GO" id="GO:0005813">
    <property type="term" value="C:centrosome"/>
    <property type="evidence" value="ECO:0000314"/>
    <property type="project" value="UniProtKB"/>
</dbReference>
<dbReference type="GO" id="GO:0005769">
    <property type="term" value="C:early endosome"/>
    <property type="evidence" value="ECO:0007669"/>
    <property type="project" value="Ensembl"/>
</dbReference>
<dbReference type="GO" id="GO:0005783">
    <property type="term" value="C:endoplasmic reticulum"/>
    <property type="evidence" value="ECO:0000314"/>
    <property type="project" value="HGNC-UCL"/>
</dbReference>
<dbReference type="GO" id="GO:0005789">
    <property type="term" value="C:endoplasmic reticulum membrane"/>
    <property type="evidence" value="ECO:0007669"/>
    <property type="project" value="UniProtKB-SubCell"/>
</dbReference>
<dbReference type="GO" id="GO:0070765">
    <property type="term" value="C:gamma-secretase complex"/>
    <property type="evidence" value="ECO:0000314"/>
    <property type="project" value="ARUK-UCL"/>
</dbReference>
<dbReference type="GO" id="GO:0005794">
    <property type="term" value="C:Golgi apparatus"/>
    <property type="evidence" value="ECO:0000314"/>
    <property type="project" value="HGNC-UCL"/>
</dbReference>
<dbReference type="GO" id="GO:0000139">
    <property type="term" value="C:Golgi membrane"/>
    <property type="evidence" value="ECO:0007669"/>
    <property type="project" value="UniProtKB-SubCell"/>
</dbReference>
<dbReference type="GO" id="GO:0000776">
    <property type="term" value="C:kinetochore"/>
    <property type="evidence" value="ECO:0000314"/>
    <property type="project" value="UniProtKB"/>
</dbReference>
<dbReference type="GO" id="GO:0016020">
    <property type="term" value="C:membrane"/>
    <property type="evidence" value="ECO:0007005"/>
    <property type="project" value="UniProtKB"/>
</dbReference>
<dbReference type="GO" id="GO:0005637">
    <property type="term" value="C:nuclear inner membrane"/>
    <property type="evidence" value="ECO:0000314"/>
    <property type="project" value="UniProtKB"/>
</dbReference>
<dbReference type="GO" id="GO:0005886">
    <property type="term" value="C:plasma membrane"/>
    <property type="evidence" value="ECO:0000314"/>
    <property type="project" value="HGNC-UCL"/>
</dbReference>
<dbReference type="GO" id="GO:0042734">
    <property type="term" value="C:presynaptic membrane"/>
    <property type="evidence" value="ECO:0007669"/>
    <property type="project" value="Ensembl"/>
</dbReference>
<dbReference type="GO" id="GO:0032991">
    <property type="term" value="C:protein-containing complex"/>
    <property type="evidence" value="ECO:0000314"/>
    <property type="project" value="UniProtKB"/>
</dbReference>
<dbReference type="GO" id="GO:0008021">
    <property type="term" value="C:synaptic vesicle"/>
    <property type="evidence" value="ECO:0007669"/>
    <property type="project" value="Ensembl"/>
</dbReference>
<dbReference type="GO" id="GO:0042500">
    <property type="term" value="F:aspartic endopeptidase activity, intramembrane cleaving"/>
    <property type="evidence" value="ECO:0000318"/>
    <property type="project" value="GO_Central"/>
</dbReference>
<dbReference type="GO" id="GO:0042987">
    <property type="term" value="P:amyloid precursor protein catabolic process"/>
    <property type="evidence" value="ECO:0000314"/>
    <property type="project" value="ARUK-UCL"/>
</dbReference>
<dbReference type="GO" id="GO:0034205">
    <property type="term" value="P:amyloid-beta formation"/>
    <property type="evidence" value="ECO:0000314"/>
    <property type="project" value="ARUK-UCL"/>
</dbReference>
<dbReference type="GO" id="GO:0055074">
    <property type="term" value="P:calcium ion homeostasis"/>
    <property type="evidence" value="ECO:0000318"/>
    <property type="project" value="GO_Central"/>
</dbReference>
<dbReference type="GO" id="GO:0035556">
    <property type="term" value="P:intracellular signal transduction"/>
    <property type="evidence" value="ECO:0007669"/>
    <property type="project" value="InterPro"/>
</dbReference>
<dbReference type="GO" id="GO:0006509">
    <property type="term" value="P:membrane protein ectodomain proteolysis"/>
    <property type="evidence" value="ECO:0000314"/>
    <property type="project" value="HGNC-UCL"/>
</dbReference>
<dbReference type="GO" id="GO:1990456">
    <property type="term" value="P:mitochondrion-endoplasmic reticulum membrane tethering"/>
    <property type="evidence" value="ECO:0000315"/>
    <property type="project" value="UniProtKB"/>
</dbReference>
<dbReference type="GO" id="GO:0007220">
    <property type="term" value="P:Notch receptor processing"/>
    <property type="evidence" value="ECO:0000304"/>
    <property type="project" value="HGNC-UCL"/>
</dbReference>
<dbReference type="GO" id="GO:0007219">
    <property type="term" value="P:Notch signaling pathway"/>
    <property type="evidence" value="ECO:0000318"/>
    <property type="project" value="GO_Central"/>
</dbReference>
<dbReference type="GO" id="GO:0016485">
    <property type="term" value="P:protein processing"/>
    <property type="evidence" value="ECO:0000314"/>
    <property type="project" value="HGNC-UCL"/>
</dbReference>
<dbReference type="GO" id="GO:0110097">
    <property type="term" value="P:regulation of calcium import into the mitochondrion"/>
    <property type="evidence" value="ECO:0000315"/>
    <property type="project" value="UniProtKB"/>
</dbReference>
<dbReference type="GO" id="GO:0001666">
    <property type="term" value="P:response to hypoxia"/>
    <property type="evidence" value="ECO:0007669"/>
    <property type="project" value="Ensembl"/>
</dbReference>
<dbReference type="FunFam" id="1.10.472.100:FF:000001">
    <property type="entry name" value="Presenilin"/>
    <property type="match status" value="1"/>
</dbReference>
<dbReference type="Gene3D" id="1.10.472.100">
    <property type="entry name" value="Presenilin"/>
    <property type="match status" value="1"/>
</dbReference>
<dbReference type="InterPro" id="IPR001493">
    <property type="entry name" value="Pept_A22A_PS2"/>
</dbReference>
<dbReference type="InterPro" id="IPR001108">
    <property type="entry name" value="Peptidase_A22A"/>
</dbReference>
<dbReference type="InterPro" id="IPR006639">
    <property type="entry name" value="Preselin/SPP"/>
</dbReference>
<dbReference type="InterPro" id="IPR042524">
    <property type="entry name" value="Presenilin_C"/>
</dbReference>
<dbReference type="PANTHER" id="PTHR10202">
    <property type="entry name" value="PRESENILIN"/>
    <property type="match status" value="1"/>
</dbReference>
<dbReference type="PANTHER" id="PTHR10202:SF24">
    <property type="entry name" value="PRESENILIN-2"/>
    <property type="match status" value="1"/>
</dbReference>
<dbReference type="Pfam" id="PF01080">
    <property type="entry name" value="Presenilin"/>
    <property type="match status" value="2"/>
</dbReference>
<dbReference type="PRINTS" id="PR01072">
    <property type="entry name" value="PRESENILIN"/>
</dbReference>
<dbReference type="PRINTS" id="PR01074">
    <property type="entry name" value="PRESENILIN2"/>
</dbReference>
<dbReference type="SMART" id="SM00730">
    <property type="entry name" value="PSN"/>
    <property type="match status" value="1"/>
</dbReference>
<gene>
    <name type="primary">PSEN2</name>
    <name type="synonym">AD4</name>
    <name type="synonym">PS2</name>
    <name type="synonym">PSNL2</name>
    <name type="synonym">STM2</name>
</gene>
<comment type="function">
    <text evidence="5 7 12 14">Probable catalytic subunit of the gamma-secretase complex, an endoprotease complex that catalyzes the intramembrane cleavage of integral membrane proteins such as Notch receptors and APP (amyloid-beta precursor protein). Requires the other members of the gamma-secretase complex to have a protease activity. May play a role in intracellular signaling and gene expression or in linking chromatin to the nuclear membrane. May function in the cytoplasmic partitioning of proteins. The holoprotein functions as a calcium-leak channel that allows the passive movement of calcium from endoplasmic reticulum to cytosol and is involved in calcium homeostasis (PubMed:16959576). Is a regulator of mitochondrion-endoplasmic reticulum membrane tethering and modulates calcium ions shuttling between ER and mitochondria (PubMed:21285369).</text>
</comment>
<comment type="subunit">
    <text evidence="1 9 23">Interacts with DOCK3 (By similarity). Homodimer. Component of the gamma-secretase complex, a complex composed of a presenilin homodimer (PSEN1 or PSEN2), nicastrin (NCSTN), APH1 (APH1A or APH1B) and PEN2. Such minimal complex is sufficient for secretase activity, although other components may exist. Interacts with HERPUD1, FLNA, FLNB and PARL.</text>
</comment>
<comment type="interaction">
    <interactant intactId="EBI-2010251">
        <id>P49810</id>
    </interactant>
    <interactant intactId="EBI-1056291">
        <id>P54819</id>
        <label>AK2</label>
    </interactant>
    <organismsDiffer>false</organismsDiffer>
    <experiments>3</experiments>
</comment>
<comment type="interaction">
    <interactant intactId="EBI-2010251">
        <id>P49810</id>
    </interactant>
    <interactant intactId="EBI-77613">
        <id>P05067</id>
        <label>APP</label>
    </interactant>
    <organismsDiffer>false</organismsDiffer>
    <experiments>4</experiments>
</comment>
<comment type="interaction">
    <interactant intactId="EBI-2010251">
        <id>P49810</id>
    </interactant>
    <interactant intactId="EBI-10186132">
        <id>Q0P5N6</id>
        <label>ARL16</label>
    </interactant>
    <organismsDiffer>false</organismsDiffer>
    <experiments>3</experiments>
</comment>
<comment type="interaction">
    <interactant intactId="EBI-2010251">
        <id>P49810</id>
    </interactant>
    <interactant intactId="EBI-519866">
        <id>Q16611</id>
        <label>BAK1</label>
    </interactant>
    <organismsDiffer>false</organismsDiffer>
    <experiments>3</experiments>
</comment>
<comment type="interaction">
    <interactant intactId="EBI-2010251">
        <id>P49810</id>
    </interactant>
    <interactant intactId="EBI-12248206">
        <id>P29466-3</id>
        <label>CASP1</label>
    </interactant>
    <organismsDiffer>false</organismsDiffer>
    <experiments>3</experiments>
</comment>
<comment type="interaction">
    <interactant intactId="EBI-2010251">
        <id>P49810</id>
    </interactant>
    <interactant intactId="EBI-10260134">
        <id>Q86WV2</id>
        <label>COX4I1</label>
    </interactant>
    <organismsDiffer>false</organismsDiffer>
    <experiments>3</experiments>
</comment>
<comment type="interaction">
    <interactant intactId="EBI-2010251">
        <id>P49810</id>
    </interactant>
    <interactant intactId="EBI-356015">
        <id>Q14204</id>
        <label>DYNC1H1</label>
    </interactant>
    <organismsDiffer>false</organismsDiffer>
    <experiments>3</experiments>
</comment>
<comment type="interaction">
    <interactant intactId="EBI-2010251">
        <id>P49810</id>
    </interactant>
    <interactant intactId="EBI-712452">
        <id>Q9BQ95</id>
        <label>ECSIT</label>
    </interactant>
    <organismsDiffer>false</organismsDiffer>
    <experiments>4</experiments>
</comment>
<comment type="interaction">
    <interactant intactId="EBI-2010251">
        <id>P49810</id>
    </interactant>
    <interactant intactId="EBI-395274">
        <id>O00472</id>
        <label>ELL2</label>
    </interactant>
    <organismsDiffer>false</organismsDiffer>
    <experiments>3</experiments>
</comment>
<comment type="interaction">
    <interactant intactId="EBI-2010251">
        <id>P49810</id>
    </interactant>
    <interactant intactId="EBI-6425864">
        <id>Q3SYB3</id>
        <label>FOXD4L6</label>
    </interactant>
    <organismsDiffer>false</organismsDiffer>
    <experiments>3</experiments>
</comment>
<comment type="interaction">
    <interactant intactId="EBI-2010251">
        <id>P49810</id>
    </interactant>
    <interactant intactId="EBI-713279">
        <id>P02792</id>
        <label>FTL</label>
    </interactant>
    <organismsDiffer>false</organismsDiffer>
    <experiments>3</experiments>
</comment>
<comment type="interaction">
    <interactant intactId="EBI-2010251">
        <id>P49810</id>
    </interactant>
    <interactant intactId="EBI-79722">
        <id>P68431</id>
        <label>H3C12</label>
    </interactant>
    <organismsDiffer>false</organismsDiffer>
    <experiments>3</experiments>
</comment>
<comment type="interaction">
    <interactant intactId="EBI-2010251">
        <id>P49810</id>
    </interactant>
    <interactant intactId="EBI-25845242">
        <id>Q8WVV9-3</id>
        <label>HNRNPLL</label>
    </interactant>
    <organismsDiffer>false</organismsDiffer>
    <experiments>3</experiments>
</comment>
<comment type="interaction">
    <interactant intactId="EBI-2010251">
        <id>P49810</id>
    </interactant>
    <interactant intactId="EBI-4397720">
        <id>Q8TDB4</id>
        <label>MGARP</label>
    </interactant>
    <organismsDiffer>false</organismsDiffer>
    <experiments>3</experiments>
</comment>
<comment type="interaction">
    <interactant intactId="EBI-2010251">
        <id>P49810</id>
    </interactant>
    <interactant intactId="EBI-2804835">
        <id>O94851</id>
        <label>MICAL2</label>
    </interactant>
    <organismsDiffer>false</organismsDiffer>
    <experiments>3</experiments>
</comment>
<comment type="interaction">
    <interactant intactId="EBI-2010251">
        <id>P49810</id>
    </interactant>
    <interactant intactId="EBI-21250407">
        <id>A4FUJ8</id>
        <label>MKL1</label>
    </interactant>
    <organismsDiffer>false</organismsDiffer>
    <experiments>3</experiments>
</comment>
<comment type="interaction">
    <interactant intactId="EBI-2010251">
        <id>P49810</id>
    </interactant>
    <interactant intactId="EBI-2829677">
        <id>P41218</id>
        <label>MNDA</label>
    </interactant>
    <organismsDiffer>false</organismsDiffer>
    <experiments>3</experiments>
</comment>
<comment type="interaction">
    <interactant intactId="EBI-2010251">
        <id>P49810</id>
    </interactant>
    <interactant intactId="EBI-748896">
        <id>Q96HT8</id>
        <label>MRFAP1L1</label>
    </interactant>
    <organismsDiffer>false</organismsDiffer>
    <experiments>3</experiments>
</comment>
<comment type="interaction">
    <interactant intactId="EBI-2010251">
        <id>P49810</id>
    </interactant>
    <interactant intactId="EBI-2880203">
        <id>O76041</id>
        <label>NEBL</label>
    </interactant>
    <organismsDiffer>false</organismsDiffer>
    <experiments>3</experiments>
</comment>
<comment type="interaction">
    <interactant intactId="EBI-2010251">
        <id>P49810</id>
    </interactant>
    <interactant intactId="EBI-935824">
        <id>Q53EL6</id>
        <label>PDCD4</label>
    </interactant>
    <organismsDiffer>false</organismsDiffer>
    <experiments>3</experiments>
</comment>
<comment type="interaction">
    <interactant intactId="EBI-2010251">
        <id>P49810</id>
    </interactant>
    <interactant intactId="EBI-716063">
        <id>Q13113</id>
        <label>PDZK1IP1</label>
    </interactant>
    <organismsDiffer>false</organismsDiffer>
    <experiments>3</experiments>
</comment>
<comment type="interaction">
    <interactant intactId="EBI-2010251">
        <id>P49810</id>
    </interactant>
    <interactant intactId="EBI-9090282">
        <id>P27986-2</id>
        <label>PIK3R1</label>
    </interactant>
    <organismsDiffer>false</organismsDiffer>
    <experiments>3</experiments>
</comment>
<comment type="interaction">
    <interactant intactId="EBI-2010251">
        <id>P49810</id>
    </interactant>
    <interactant intactId="EBI-722416">
        <id>Q99496</id>
        <label>RNF2</label>
    </interactant>
    <organismsDiffer>false</organismsDiffer>
    <experiments>3</experiments>
</comment>
<comment type="interaction">
    <interactant intactId="EBI-2010251">
        <id>P49810</id>
    </interactant>
    <interactant intactId="EBI-752324">
        <id>Q8N488</id>
        <label>RYBP</label>
    </interactant>
    <organismsDiffer>false</organismsDiffer>
    <experiments>3</experiments>
</comment>
<comment type="interaction">
    <interactant intactId="EBI-2010251">
        <id>P49810</id>
    </interactant>
    <interactant intactId="EBI-10182463">
        <id>Q2NKQ1-4</id>
        <label>SGSM1</label>
    </interactant>
    <organismsDiffer>false</organismsDiffer>
    <experiments>3</experiments>
</comment>
<comment type="interaction">
    <interactant intactId="EBI-2010251">
        <id>P49810</id>
    </interactant>
    <interactant intactId="EBI-358545">
        <id>Q9GZS3</id>
        <label>SKIC8</label>
    </interactant>
    <organismsDiffer>false</organismsDiffer>
    <experiments>3</experiments>
</comment>
<comment type="interaction">
    <interactant intactId="EBI-2010251">
        <id>P49810</id>
    </interactant>
    <interactant intactId="EBI-25831241">
        <id>Q9NSD5-3</id>
        <label>SLC6A13</label>
    </interactant>
    <organismsDiffer>false</organismsDiffer>
    <experiments>3</experiments>
</comment>
<comment type="interaction">
    <interactant intactId="EBI-2010251">
        <id>P49810</id>
    </interactant>
    <interactant intactId="EBI-9087806">
        <id>O95416</id>
        <label>SOX14</label>
    </interactant>
    <organismsDiffer>false</organismsDiffer>
    <experiments>3</experiments>
</comment>
<comment type="interaction">
    <interactant intactId="EBI-2010251">
        <id>P49810</id>
    </interactant>
    <interactant intactId="EBI-11175533">
        <id>Q3SY56</id>
        <label>SP6</label>
    </interactant>
    <organismsDiffer>false</organismsDiffer>
    <experiments>3</experiments>
</comment>
<comment type="interaction">
    <interactant intactId="EBI-2010251">
        <id>P49810</id>
    </interactant>
    <interactant intactId="EBI-749370">
        <id>Q9BSL1</id>
        <label>UBAC1</label>
    </interactant>
    <organismsDiffer>false</organismsDiffer>
    <experiments>3</experiments>
</comment>
<comment type="interaction">
    <interactant intactId="EBI-2010251">
        <id>P49810</id>
    </interactant>
    <interactant intactId="EBI-2682299">
        <id>Q96NC0</id>
        <label>ZMAT2</label>
    </interactant>
    <organismsDiffer>false</organismsDiffer>
    <experiments>3</experiments>
</comment>
<comment type="interaction">
    <interactant intactId="EBI-2010251">
        <id>P49810</id>
    </interactant>
    <interactant intactId="EBI-2813661">
        <id>Q8N895</id>
        <label>ZNF366</label>
    </interactant>
    <organismsDiffer>false</organismsDiffer>
    <experiments>3</experiments>
</comment>
<comment type="interaction">
    <interactant intactId="EBI-2010251">
        <id>P49810</id>
    </interactant>
    <interactant intactId="EBI-12021938">
        <id>Q8NBB4-2</id>
        <label>ZSCAN1</label>
    </interactant>
    <organismsDiffer>false</organismsDiffer>
    <experiments>3</experiments>
</comment>
<comment type="interaction">
    <interactant intactId="EBI-2010251">
        <id>P49810</id>
    </interactant>
    <interactant intactId="EBI-1538838">
        <id>Q2QGD7</id>
        <label>ZXDC</label>
    </interactant>
    <organismsDiffer>false</organismsDiffer>
    <experiments>3</experiments>
</comment>
<comment type="subcellular location">
    <subcellularLocation>
        <location evidence="21">Endoplasmic reticulum membrane</location>
        <topology evidence="21">Multi-pass membrane protein</topology>
    </subcellularLocation>
    <subcellularLocation>
        <location evidence="21">Golgi apparatus membrane</location>
        <topology evidence="21">Multi-pass membrane protein</topology>
    </subcellularLocation>
</comment>
<comment type="alternative products">
    <event type="alternative splicing"/>
    <isoform>
        <id>P49810-1</id>
        <name>1</name>
        <sequence type="displayed"/>
    </isoform>
    <isoform>
        <id>P49810-2</id>
        <name>2</name>
        <sequence type="described" ref="VSP_005194"/>
    </isoform>
    <isoform>
        <id>P49810-3</id>
        <name>3</name>
        <sequence type="described" ref="VSP_043648"/>
    </isoform>
</comment>
<comment type="tissue specificity">
    <text evidence="21">Isoform 1 is seen in the placenta, skeletal muscle and heart while isoform 2 is seen in the heart, brain, placenta, liver, skeletal muscle and kidney.</text>
</comment>
<comment type="domain">
    <text evidence="1">The PAL motif is required for normal active site conformation.</text>
</comment>
<comment type="PTM">
    <text>Heterogeneous proteolytic processing generates N-terminal and C-terminal fragments.</text>
</comment>
<comment type="PTM">
    <text>Phosphorylated on serine residues.</text>
</comment>
<comment type="disease" evidence="6 8 10 11 12 14 15 16 17 18 19 20 22">
    <disease id="DI-00087">
        <name>Alzheimer disease 4</name>
        <acronym>AD4</acronym>
        <description>A familial early-onset form of Alzheimer disease. Alzheimer disease is a neurodegenerative disorder characterized by progressive dementia, loss of cognitive abilities, and deposition of fibrillar amyloid proteins as intraneuronal neurofibrillary tangles, extracellular amyloid plaques and vascular amyloid deposits. The major constituents of these plaques are neurotoxic amyloid-beta protein 40 and amyloid-beta protein 42, that are produced by the proteolysis of the transmembrane APP protein. The cytotoxic C-terminal fragments (CTFs) and the caspase-cleaved products, such as C31, are also implicated in neuronal death.</description>
        <dbReference type="MIM" id="606889"/>
    </disease>
    <text>The disease is caused by variants affecting the gene represented in this entry.</text>
</comment>
<comment type="disease" evidence="13">
    <disease id="DI-02968">
        <name>Cardiomyopathy, dilated, 1V</name>
        <acronym>CMD1V</acronym>
        <description>A disorder characterized by ventricular dilation and impaired systolic function, resulting in congestive heart failure and arrhythmia. Patients are at risk of premature death.</description>
        <dbReference type="MIM" id="613697"/>
    </disease>
    <text>The disease is caused by variants affecting the gene represented in this entry.</text>
</comment>
<comment type="similarity">
    <text evidence="25">Belongs to the peptidase A22A family.</text>
</comment>
<comment type="online information" name="Alzheimer Research Forum">
    <link uri="https://www.alzforum.org/mutations/psen-2"/>
    <text>Presenilins mutations</text>
</comment>
<comment type="online information" name="Atlas of Genetics and Cytogenetics in Oncology and Haematology">
    <link uri="https://atlasgeneticsoncology.org/gene/41883/PSEN2"/>
</comment>
<proteinExistence type="evidence at protein level"/>
<protein>
    <recommendedName>
        <fullName>Presenilin-2</fullName>
        <shortName>PS-2</shortName>
        <ecNumber>3.4.23.-</ecNumber>
    </recommendedName>
    <alternativeName>
        <fullName>AD3LP</fullName>
    </alternativeName>
    <alternativeName>
        <fullName>AD5</fullName>
    </alternativeName>
    <alternativeName>
        <fullName>E5-1</fullName>
    </alternativeName>
    <alternativeName>
        <fullName>STM-2</fullName>
    </alternativeName>
    <component>
        <recommendedName>
            <fullName>Presenilin-2 NTF subunit</fullName>
        </recommendedName>
    </component>
    <component>
        <recommendedName>
            <fullName>Presenilin-2 CTF subunit</fullName>
        </recommendedName>
    </component>
</protein>
<sequence length="448" mass="50140">MLTFMASDSEEEVCDERTSLMSAESPTPRSCQEGRQGPEDGENTAQWRSQENEEDGEEDPDRYVCSGVPGRPPGLEEELTLKYGAKHVIMLFVPVTLCMIVVVATIKSVRFYTEKNGQLIYTPFTEDTPSVGQRLLNSVLNTLIMISVIVVMTIFLVVLYKYRCYKFIHGWLIMSSLMLLFLFTYIYLGEVLKTYNVAMDYPTLLLTVWNFGAVGMVCIHWKGPLVLQQAYLIMISALMALVFIKYLPEWSAWVILGAISVYDLVAVLCPKGPLRMLVETAQERNEPIFPALIYSSAMVWTVGMAKLDPSSQGALQLPYDPEMEEDSYDSFGEPSYPEVFEPPLTGYPGEELEEEEERGVKLGLGDFIFYSVLVGKAAATGSGDWNTTLACFVAILIGLCLTLLLLAVFKKALPALPISITFGLIFYFSTDNLVRPFMDTLASHQLYI</sequence>
<keyword id="KW-0002">3D-structure</keyword>
<keyword id="KW-0025">Alternative splicing</keyword>
<keyword id="KW-0026">Alzheimer disease</keyword>
<keyword id="KW-1008">Amyloidosis</keyword>
<keyword id="KW-0122">Cardiomyopathy</keyword>
<keyword id="KW-0225">Disease variant</keyword>
<keyword id="KW-0256">Endoplasmic reticulum</keyword>
<keyword id="KW-0333">Golgi apparatus</keyword>
<keyword id="KW-0378">Hydrolase</keyword>
<keyword id="KW-0472">Membrane</keyword>
<keyword id="KW-0523">Neurodegeneration</keyword>
<keyword id="KW-0914">Notch signaling pathway</keyword>
<keyword id="KW-0597">Phosphoprotein</keyword>
<keyword id="KW-0645">Protease</keyword>
<keyword id="KW-1267">Proteomics identification</keyword>
<keyword id="KW-1185">Reference proteome</keyword>
<keyword id="KW-0812">Transmembrane</keyword>
<keyword id="KW-1133">Transmembrane helix</keyword>
<accession>P49810</accession>
<accession>A8K8D4</accession>
<accession>B1AP21</accession>
<accession>Q96P32</accession>